<organism>
    <name type="scientific">Heliobacterium modesticaldum (strain ATCC 51547 / Ice1)</name>
    <dbReference type="NCBI Taxonomy" id="498761"/>
    <lineage>
        <taxon>Bacteria</taxon>
        <taxon>Bacillati</taxon>
        <taxon>Bacillota</taxon>
        <taxon>Clostridia</taxon>
        <taxon>Eubacteriales</taxon>
        <taxon>Heliobacteriaceae</taxon>
        <taxon>Heliomicrobium</taxon>
    </lineage>
</organism>
<dbReference type="EC" id="3.6.4.-" evidence="1"/>
<dbReference type="EMBL" id="CP000930">
    <property type="protein sequence ID" value="ABZ84387.1"/>
    <property type="molecule type" value="Genomic_DNA"/>
</dbReference>
<dbReference type="RefSeq" id="WP_012282891.1">
    <property type="nucleotide sequence ID" value="NC_010337.2"/>
</dbReference>
<dbReference type="SMR" id="B0TF70"/>
<dbReference type="STRING" id="498761.HM1_1829"/>
<dbReference type="KEGG" id="hmo:HM1_1829"/>
<dbReference type="eggNOG" id="COG2255">
    <property type="taxonomic scope" value="Bacteria"/>
</dbReference>
<dbReference type="HOGENOM" id="CLU_055599_1_0_9"/>
<dbReference type="OrthoDB" id="9804478at2"/>
<dbReference type="Proteomes" id="UP000008550">
    <property type="component" value="Chromosome"/>
</dbReference>
<dbReference type="GO" id="GO:0005737">
    <property type="term" value="C:cytoplasm"/>
    <property type="evidence" value="ECO:0007669"/>
    <property type="project" value="UniProtKB-SubCell"/>
</dbReference>
<dbReference type="GO" id="GO:0048476">
    <property type="term" value="C:Holliday junction resolvase complex"/>
    <property type="evidence" value="ECO:0007669"/>
    <property type="project" value="UniProtKB-UniRule"/>
</dbReference>
<dbReference type="GO" id="GO:0005524">
    <property type="term" value="F:ATP binding"/>
    <property type="evidence" value="ECO:0007669"/>
    <property type="project" value="UniProtKB-UniRule"/>
</dbReference>
<dbReference type="GO" id="GO:0016887">
    <property type="term" value="F:ATP hydrolysis activity"/>
    <property type="evidence" value="ECO:0007669"/>
    <property type="project" value="InterPro"/>
</dbReference>
<dbReference type="GO" id="GO:0000400">
    <property type="term" value="F:four-way junction DNA binding"/>
    <property type="evidence" value="ECO:0007669"/>
    <property type="project" value="UniProtKB-UniRule"/>
</dbReference>
<dbReference type="GO" id="GO:0009378">
    <property type="term" value="F:four-way junction helicase activity"/>
    <property type="evidence" value="ECO:0007669"/>
    <property type="project" value="InterPro"/>
</dbReference>
<dbReference type="GO" id="GO:0006310">
    <property type="term" value="P:DNA recombination"/>
    <property type="evidence" value="ECO:0007669"/>
    <property type="project" value="UniProtKB-UniRule"/>
</dbReference>
<dbReference type="GO" id="GO:0006281">
    <property type="term" value="P:DNA repair"/>
    <property type="evidence" value="ECO:0007669"/>
    <property type="project" value="UniProtKB-UniRule"/>
</dbReference>
<dbReference type="CDD" id="cd00009">
    <property type="entry name" value="AAA"/>
    <property type="match status" value="1"/>
</dbReference>
<dbReference type="Gene3D" id="1.10.8.60">
    <property type="match status" value="1"/>
</dbReference>
<dbReference type="Gene3D" id="3.40.50.300">
    <property type="entry name" value="P-loop containing nucleotide triphosphate hydrolases"/>
    <property type="match status" value="1"/>
</dbReference>
<dbReference type="Gene3D" id="1.10.10.10">
    <property type="entry name" value="Winged helix-like DNA-binding domain superfamily/Winged helix DNA-binding domain"/>
    <property type="match status" value="1"/>
</dbReference>
<dbReference type="HAMAP" id="MF_00016">
    <property type="entry name" value="DNA_HJ_migration_RuvB"/>
    <property type="match status" value="1"/>
</dbReference>
<dbReference type="InterPro" id="IPR003593">
    <property type="entry name" value="AAA+_ATPase"/>
</dbReference>
<dbReference type="InterPro" id="IPR041445">
    <property type="entry name" value="AAA_lid_4"/>
</dbReference>
<dbReference type="InterPro" id="IPR004605">
    <property type="entry name" value="DNA_helicase_Holl-junc_RuvB"/>
</dbReference>
<dbReference type="InterPro" id="IPR027417">
    <property type="entry name" value="P-loop_NTPase"/>
</dbReference>
<dbReference type="InterPro" id="IPR008824">
    <property type="entry name" value="RuvB-like_N"/>
</dbReference>
<dbReference type="InterPro" id="IPR008823">
    <property type="entry name" value="RuvB_C"/>
</dbReference>
<dbReference type="InterPro" id="IPR036388">
    <property type="entry name" value="WH-like_DNA-bd_sf"/>
</dbReference>
<dbReference type="InterPro" id="IPR036390">
    <property type="entry name" value="WH_DNA-bd_sf"/>
</dbReference>
<dbReference type="NCBIfam" id="NF000868">
    <property type="entry name" value="PRK00080.1"/>
    <property type="match status" value="1"/>
</dbReference>
<dbReference type="NCBIfam" id="TIGR00635">
    <property type="entry name" value="ruvB"/>
    <property type="match status" value="1"/>
</dbReference>
<dbReference type="PANTHER" id="PTHR42848">
    <property type="match status" value="1"/>
</dbReference>
<dbReference type="PANTHER" id="PTHR42848:SF1">
    <property type="entry name" value="HOLLIDAY JUNCTION BRANCH MIGRATION COMPLEX SUBUNIT RUVB"/>
    <property type="match status" value="1"/>
</dbReference>
<dbReference type="Pfam" id="PF17864">
    <property type="entry name" value="AAA_lid_4"/>
    <property type="match status" value="1"/>
</dbReference>
<dbReference type="Pfam" id="PF05491">
    <property type="entry name" value="RuvB_C"/>
    <property type="match status" value="1"/>
</dbReference>
<dbReference type="Pfam" id="PF05496">
    <property type="entry name" value="RuvB_N"/>
    <property type="match status" value="1"/>
</dbReference>
<dbReference type="SMART" id="SM00382">
    <property type="entry name" value="AAA"/>
    <property type="match status" value="1"/>
</dbReference>
<dbReference type="SUPFAM" id="SSF52540">
    <property type="entry name" value="P-loop containing nucleoside triphosphate hydrolases"/>
    <property type="match status" value="1"/>
</dbReference>
<dbReference type="SUPFAM" id="SSF46785">
    <property type="entry name" value="Winged helix' DNA-binding domain"/>
    <property type="match status" value="1"/>
</dbReference>
<comment type="function">
    <text evidence="1">The RuvA-RuvB-RuvC complex processes Holliday junction (HJ) DNA during genetic recombination and DNA repair, while the RuvA-RuvB complex plays an important role in the rescue of blocked DNA replication forks via replication fork reversal (RFR). RuvA specifically binds to HJ cruciform DNA, conferring on it an open structure. The RuvB hexamer acts as an ATP-dependent pump, pulling dsDNA into and through the RuvAB complex. RuvB forms 2 homohexamers on either side of HJ DNA bound by 1 or 2 RuvA tetramers; 4 subunits per hexamer contact DNA at a time. Coordinated motions by a converter formed by DNA-disengaged RuvB subunits stimulates ATP hydrolysis and nucleotide exchange. Immobilization of the converter enables RuvB to convert the ATP-contained energy into a lever motion, pulling 2 nucleotides of DNA out of the RuvA tetramer per ATP hydrolyzed, thus driving DNA branch migration. The RuvB motors rotate together with the DNA substrate, which together with the progressing nucleotide cycle form the mechanistic basis for DNA recombination by continuous HJ branch migration. Branch migration allows RuvC to scan DNA until it finds its consensus sequence, where it cleaves and resolves cruciform DNA.</text>
</comment>
<comment type="catalytic activity">
    <reaction evidence="1">
        <text>ATP + H2O = ADP + phosphate + H(+)</text>
        <dbReference type="Rhea" id="RHEA:13065"/>
        <dbReference type="ChEBI" id="CHEBI:15377"/>
        <dbReference type="ChEBI" id="CHEBI:15378"/>
        <dbReference type="ChEBI" id="CHEBI:30616"/>
        <dbReference type="ChEBI" id="CHEBI:43474"/>
        <dbReference type="ChEBI" id="CHEBI:456216"/>
    </reaction>
</comment>
<comment type="subunit">
    <text evidence="1">Homohexamer. Forms an RuvA(8)-RuvB(12)-Holliday junction (HJ) complex. HJ DNA is sandwiched between 2 RuvA tetramers; dsDNA enters through RuvA and exits via RuvB. An RuvB hexamer assembles on each DNA strand where it exits the tetramer. Each RuvB hexamer is contacted by two RuvA subunits (via domain III) on 2 adjacent RuvB subunits; this complex drives branch migration. In the full resolvosome a probable DNA-RuvA(4)-RuvB(12)-RuvC(2) complex forms which resolves the HJ.</text>
</comment>
<comment type="subcellular location">
    <subcellularLocation>
        <location evidence="1">Cytoplasm</location>
    </subcellularLocation>
</comment>
<comment type="domain">
    <text evidence="1">Has 3 domains, the large (RuvB-L) and small ATPase (RuvB-S) domains and the C-terminal head (RuvB-H) domain. The head domain binds DNA, while the ATPase domains jointly bind ATP, ADP or are empty depending on the state of the subunit in the translocation cycle. During a single DNA translocation step the structure of each domain remains the same, but their relative positions change.</text>
</comment>
<comment type="similarity">
    <text evidence="1">Belongs to the RuvB family.</text>
</comment>
<gene>
    <name evidence="1" type="primary">ruvB</name>
    <name type="ordered locus">Helmi_17620</name>
    <name type="ORF">HM1_1829</name>
</gene>
<feature type="chain" id="PRO_1000089649" description="Holliday junction branch migration complex subunit RuvB">
    <location>
        <begin position="1"/>
        <end position="370"/>
    </location>
</feature>
<feature type="region of interest" description="Large ATPase domain (RuvB-L)" evidence="1">
    <location>
        <begin position="1"/>
        <end position="182"/>
    </location>
</feature>
<feature type="region of interest" description="Small ATPAse domain (RuvB-S)" evidence="1">
    <location>
        <begin position="183"/>
        <end position="253"/>
    </location>
</feature>
<feature type="region of interest" description="Head domain (RuvB-H)" evidence="1">
    <location>
        <begin position="256"/>
        <end position="370"/>
    </location>
</feature>
<feature type="binding site" evidence="1">
    <location>
        <position position="21"/>
    </location>
    <ligand>
        <name>ATP</name>
        <dbReference type="ChEBI" id="CHEBI:30616"/>
    </ligand>
</feature>
<feature type="binding site" evidence="1">
    <location>
        <position position="22"/>
    </location>
    <ligand>
        <name>ATP</name>
        <dbReference type="ChEBI" id="CHEBI:30616"/>
    </ligand>
</feature>
<feature type="binding site" evidence="1">
    <location>
        <position position="63"/>
    </location>
    <ligand>
        <name>ATP</name>
        <dbReference type="ChEBI" id="CHEBI:30616"/>
    </ligand>
</feature>
<feature type="binding site" evidence="1">
    <location>
        <position position="66"/>
    </location>
    <ligand>
        <name>ATP</name>
        <dbReference type="ChEBI" id="CHEBI:30616"/>
    </ligand>
</feature>
<feature type="binding site" evidence="1">
    <location>
        <position position="67"/>
    </location>
    <ligand>
        <name>ATP</name>
        <dbReference type="ChEBI" id="CHEBI:30616"/>
    </ligand>
</feature>
<feature type="binding site" evidence="1">
    <location>
        <position position="67"/>
    </location>
    <ligand>
        <name>Mg(2+)</name>
        <dbReference type="ChEBI" id="CHEBI:18420"/>
    </ligand>
</feature>
<feature type="binding site" evidence="1">
    <location>
        <position position="68"/>
    </location>
    <ligand>
        <name>ATP</name>
        <dbReference type="ChEBI" id="CHEBI:30616"/>
    </ligand>
</feature>
<feature type="binding site" evidence="1">
    <location>
        <begin position="129"/>
        <end position="131"/>
    </location>
    <ligand>
        <name>ATP</name>
        <dbReference type="ChEBI" id="CHEBI:30616"/>
    </ligand>
</feature>
<feature type="binding site" evidence="1">
    <location>
        <position position="172"/>
    </location>
    <ligand>
        <name>ATP</name>
        <dbReference type="ChEBI" id="CHEBI:30616"/>
    </ligand>
</feature>
<feature type="binding site" evidence="1">
    <location>
        <position position="182"/>
    </location>
    <ligand>
        <name>ATP</name>
        <dbReference type="ChEBI" id="CHEBI:30616"/>
    </ligand>
</feature>
<feature type="binding site" evidence="1">
    <location>
        <position position="219"/>
    </location>
    <ligand>
        <name>ATP</name>
        <dbReference type="ChEBI" id="CHEBI:30616"/>
    </ligand>
</feature>
<feature type="binding site" evidence="1">
    <location>
        <position position="311"/>
    </location>
    <ligand>
        <name>DNA</name>
        <dbReference type="ChEBI" id="CHEBI:16991"/>
    </ligand>
</feature>
<feature type="binding site" evidence="1">
    <location>
        <position position="316"/>
    </location>
    <ligand>
        <name>DNA</name>
        <dbReference type="ChEBI" id="CHEBI:16991"/>
    </ligand>
</feature>
<keyword id="KW-0067">ATP-binding</keyword>
<keyword id="KW-0963">Cytoplasm</keyword>
<keyword id="KW-0227">DNA damage</keyword>
<keyword id="KW-0233">DNA recombination</keyword>
<keyword id="KW-0234">DNA repair</keyword>
<keyword id="KW-0238">DNA-binding</keyword>
<keyword id="KW-0378">Hydrolase</keyword>
<keyword id="KW-0547">Nucleotide-binding</keyword>
<keyword id="KW-1185">Reference proteome</keyword>
<evidence type="ECO:0000255" key="1">
    <source>
        <dbReference type="HAMAP-Rule" id="MF_00016"/>
    </source>
</evidence>
<protein>
    <recommendedName>
        <fullName evidence="1">Holliday junction branch migration complex subunit RuvB</fullName>
        <ecNumber evidence="1">3.6.4.-</ecNumber>
    </recommendedName>
</protein>
<proteinExistence type="inferred from homology"/>
<reference key="1">
    <citation type="journal article" date="2008" name="J. Bacteriol.">
        <title>The genome of Heliobacterium modesticaldum, a phototrophic representative of the Firmicutes containing the simplest photosynthetic apparatus.</title>
        <authorList>
            <person name="Sattley W.M."/>
            <person name="Madigan M.T."/>
            <person name="Swingley W.D."/>
            <person name="Cheung P.C."/>
            <person name="Clocksin K.M."/>
            <person name="Conrad A.L."/>
            <person name="Dejesa L.C."/>
            <person name="Honchak B.M."/>
            <person name="Jung D.O."/>
            <person name="Karbach L.E."/>
            <person name="Kurdoglu A."/>
            <person name="Lahiri S."/>
            <person name="Mastrian S.D."/>
            <person name="Page L.E."/>
            <person name="Taylor H.L."/>
            <person name="Wang Z.T."/>
            <person name="Raymond J."/>
            <person name="Chen M."/>
            <person name="Blankenship R.E."/>
            <person name="Touchman J.W."/>
        </authorList>
    </citation>
    <scope>NUCLEOTIDE SEQUENCE [LARGE SCALE GENOMIC DNA]</scope>
    <source>
        <strain>ATCC 51547 / Ice1</strain>
    </source>
</reference>
<name>RUVB_HELMI</name>
<accession>B0TF70</accession>
<sequence>MDERMMTSAKRPEDRETEWSLRPRTLREYIGQDKLKENLTVFIQAALGRREPLDHVLLYGPPGLGKTTLAQIIAQELGVQLRVTSGPAIERPGDLAAILTNLQPMDVLFIDEIHRLNRAVEEVLYPAMEDFCLDIVIGKGPAARSIRIDLPRFTLVGATTRAGMLTSPLRDRFGVIHRLEYYRPDELEFIILRAATILGVTAEPEGAREIALRSRGTPRIANRLLKRVRDYAQVLSDGVVTGEVAREALRRLEVDPRGLDTTDQRLLEALIRKFAGGPVGVETLAASVGESVDTVEDVVEPYLMQLGFLNRTPRGRMATIAACAHLGVPVPAGLLALQEGRPALLPSATDDTSSTAVGAAAEQAALSFDE</sequence>